<feature type="signal peptide" evidence="1">
    <location>
        <begin position="1"/>
        <end position="16"/>
    </location>
</feature>
<feature type="chain" id="PRO_0000440457" description="Hemagglutinin" evidence="1">
    <location>
        <begin position="17"/>
        <end position="565"/>
    </location>
</feature>
<feature type="chain" id="PRO_0000038988" description="Hemagglutinin HA1 chain">
    <location>
        <begin position="17"/>
        <end position="343"/>
    </location>
</feature>
<feature type="chain" id="PRO_0000038989" description="Hemagglutinin HA2 chain" evidence="1">
    <location>
        <begin position="345"/>
        <end position="565"/>
    </location>
</feature>
<feature type="topological domain" description="Extracellular" evidence="1">
    <location>
        <begin position="17"/>
        <end position="529"/>
    </location>
</feature>
<feature type="transmembrane region" description="Helical" evidence="1">
    <location>
        <begin position="530"/>
        <end position="550"/>
    </location>
</feature>
<feature type="topological domain" description="Cytoplasmic" evidence="1">
    <location>
        <begin position="551"/>
        <end position="565"/>
    </location>
</feature>
<feature type="site" description="Cleavage; by host" evidence="1">
    <location>
        <begin position="344"/>
        <end position="345"/>
    </location>
</feature>
<feature type="lipid moiety-binding region" description="S-palmitoyl cysteine; by host" evidence="1">
    <location>
        <position position="554"/>
    </location>
</feature>
<feature type="lipid moiety-binding region" description="S-palmitoyl cysteine; by host" evidence="1">
    <location>
        <position position="561"/>
    </location>
</feature>
<feature type="lipid moiety-binding region" description="S-palmitoyl cysteine; by host" evidence="1">
    <location>
        <position position="564"/>
    </location>
</feature>
<feature type="glycosylation site" description="N-linked (GlcNAc...) asparagine; by host" evidence="1">
    <location>
        <position position="23"/>
    </location>
</feature>
<feature type="glycosylation site" description="N-linked (GlcNAc...) asparagine; by host" evidence="1">
    <location>
        <position position="37"/>
    </location>
</feature>
<feature type="glycosylation site" description="N-linked (GlcNAc...) asparagine; by host" evidence="1">
    <location>
        <position position="53"/>
    </location>
</feature>
<feature type="glycosylation site" description="N-linked (GlcNAc...) asparagine; by host" evidence="1">
    <location>
        <position position="78"/>
    </location>
</feature>
<feature type="glycosylation site" description="N-linked (GlcNAc...) asparagine; by host" evidence="1">
    <location>
        <position position="180"/>
    </location>
</feature>
<feature type="glycosylation site" description="N-linked (GlcNAc...) asparagine; by host" evidence="1">
    <location>
        <position position="300"/>
    </location>
</feature>
<feature type="glycosylation site" description="N-linked (GlcNAc...) asparagine; by host" evidence="1">
    <location>
        <position position="498"/>
    </location>
</feature>
<feature type="disulfide bond" description="Interchain (between HA1 and HA2 chains)" evidence="1">
    <location>
        <begin position="29"/>
        <end position="481"/>
    </location>
</feature>
<feature type="disulfide bond" evidence="1">
    <location>
        <begin position="67"/>
        <end position="292"/>
    </location>
</feature>
<feature type="disulfide bond" evidence="1">
    <location>
        <begin position="79"/>
        <end position="91"/>
    </location>
</feature>
<feature type="disulfide bond" evidence="1">
    <location>
        <begin position="112"/>
        <end position="154"/>
    </location>
</feature>
<feature type="disulfide bond" evidence="1">
    <location>
        <begin position="296"/>
        <end position="320"/>
    </location>
</feature>
<feature type="disulfide bond" evidence="1">
    <location>
        <begin position="488"/>
        <end position="492"/>
    </location>
</feature>
<comment type="function">
    <text>Binds to sialic acid-containing receptors on the cell surface, bringing about the attachment of the virus particle to the cell. This attachment induces virion internalization of about two third of the virus particles through clathrin-dependent endocytosis and about one third through a clathrin- and caveolin-independent pathway. Plays a major role in the determination of host range restriction and virulence. Class I viral fusion protein. Responsible for penetration of the virus into the cell cytoplasm by mediating the fusion of the membrane of the endocytosed virus particle with the endosomal membrane. Low pH in endosomes induces an irreversible conformational change in HA2, releasing the fusion hydrophobic peptide. Several trimers are required to form a competent fusion pore.</text>
</comment>
<comment type="function">
    <text evidence="1">Binds to sialic acid-containing receptors on the cell surface, bringing about the attachment of the virus particle to the cell. This attachment induces virion internalization either through clathrin-dependent endocytosis or through clathrin- and caveolin-independent pathway. Plays a major role in the determination of host range restriction and virulence. Class I viral fusion protein. Responsible for penetration of the virus into the cell cytoplasm by mediating the fusion of the membrane of the endocytosed virus particle with the endosomal membrane. Low pH in endosomes induces an irreversible conformational change in HA2, releasing the fusion hydrophobic peptide. Several trimers are required to form a competent fusion pore.</text>
</comment>
<comment type="subunit">
    <text evidence="1">Homotrimer of disulfide-linked HA1-HA2.</text>
</comment>
<comment type="subcellular location">
    <subcellularLocation>
        <location evidence="1">Virion membrane</location>
        <topology evidence="1">Single-pass type I membrane protein</topology>
    </subcellularLocation>
    <subcellularLocation>
        <location evidence="1">Host apical cell membrane</location>
        <topology evidence="1">Single-pass type I membrane protein</topology>
    </subcellularLocation>
    <text evidence="1">Targeted to the apical plasma membrane in epithelial polarized cells through a signal present in the transmembrane domain. Associated with glycosphingolipid- and cholesterol-enriched detergent-resistant lipid rafts.</text>
</comment>
<comment type="PTM">
    <text evidence="1">Palmitoylated.</text>
</comment>
<comment type="PTM">
    <text evidence="1">In natural infection, inactive HA is matured into HA1 and HA2 outside the cell by one or more trypsin-like, arginine-specific endoprotease secreted by the bronchial epithelial cells. One identified protease that may be involved in this process is secreted in lungs by club cells.</text>
</comment>
<comment type="miscellaneous">
    <text>Major glycoprotein, comprises over 80% of the envelope proteins present in virus particle.</text>
</comment>
<comment type="miscellaneous">
    <text>The extent of infection into host organism is determined by HA. Influenza viruses bud from the apical surface of polarized epithelial cells (e.g. bronchial epithelial cells) into lumen of lungs and are therefore usually pneumotropic. The reason is that HA is cleaved by tryptase clara which is restricted to lungs. However, HAs of H5 and H7 pantropic avian viruses subtypes can be cleaved by furin and subtilisin-type enzymes, allowing the virus to grow in other organs than lungs.</text>
</comment>
<comment type="miscellaneous">
    <text evidence="2">The influenza A genome consist of 8 RNA segments. Genetic variation of hemagglutinin and/or neuraminidase genes results in the emergence of new influenza strains. The mechanism of variation can be the result of point mutations or the result of genetic reassortment between segments of two different strains.</text>
</comment>
<comment type="similarity">
    <text evidence="1">Belongs to the influenza viruses hemagglutinin family.</text>
</comment>
<sequence length="565" mass="63749">MKTTIILILLTHWVYSQNPISGNNTATLCLGHHAVANGTLVKTITDDQIEVTNATELVQSTSIGKICNNPYRVLDGRNCTLIDAMLGDPHCDAFQYEKWDLFIERSSAFSNCYPYDIPDYASLRSIVASSGTLEFTAEGFTWTGVTQNGESGSCRRGSADSFFSRLNWLTKSGDSYPTLNVTMPNNNNFDKLYIWGIHHPSTNDEQTKLYVQESGRVTVSTKRSQQTIIPNIGSRPWVRGQAGRISIYWTIVKPGDVLMINSNGNLVAPRGYFKMRTEKSSIMRSDAPIDTCVSECITPNGSIPNDKPFQNVNKVTYGKCPKYIKQNTLKLATGMRNVPEKQIRGIFGAIAGFIENGWEGMVDGWYGFRYQNSEGTGQAGDLKSTQAAIDQINGKLNRVIERTNEKFHQIEKEFSEVEGRIQDLEKYVEDTKIDLWSYNAELLVALENQHTIDLTDAEMNKLFEKTRRQLRENAEDMGGGCFKIYHKCDNACIGSIRNGTYDHYIYRDEALNNRFQIKGVELKSGYKDWILWISFAISCFLICVVLLGFIMWACQKGNIRCNICI</sequence>
<protein>
    <recommendedName>
        <fullName evidence="1">Hemagglutinin</fullName>
    </recommendedName>
    <component>
        <recommendedName>
            <fullName evidence="1">Hemagglutinin HA1 chain</fullName>
        </recommendedName>
    </component>
    <component>
        <recommendedName>
            <fullName evidence="1">Hemagglutinin HA2 chain</fullName>
        </recommendedName>
    </component>
</protein>
<evidence type="ECO:0000255" key="1">
    <source>
        <dbReference type="HAMAP-Rule" id="MF_04072"/>
    </source>
</evidence>
<evidence type="ECO:0000305" key="2"/>
<proteinExistence type="inferred from homology"/>
<organismHost>
    <name type="scientific">Aves</name>
    <dbReference type="NCBI Taxonomy" id="8782"/>
</organismHost>
<organismHost>
    <name type="scientific">Equus caballus</name>
    <name type="common">Horse</name>
    <dbReference type="NCBI Taxonomy" id="9796"/>
</organismHost>
<organism>
    <name type="scientific">Influenza A virus (strain A/Equine/New Market/1976 H3N8)</name>
    <dbReference type="NCBI Taxonomy" id="11408"/>
    <lineage>
        <taxon>Viruses</taxon>
        <taxon>Riboviria</taxon>
        <taxon>Orthornavirae</taxon>
        <taxon>Negarnaviricota</taxon>
        <taxon>Polyploviricotina</taxon>
        <taxon>Insthoviricetes</taxon>
        <taxon>Articulavirales</taxon>
        <taxon>Orthomyxoviridae</taxon>
        <taxon>Alphainfluenzavirus</taxon>
        <taxon>Alphainfluenzavirus influenzae</taxon>
        <taxon>Influenza A virus</taxon>
    </lineage>
</organism>
<dbReference type="EMBL" id="M24722">
    <property type="protein sequence ID" value="AAA43107.1"/>
    <property type="status" value="ALT_SEQ"/>
    <property type="molecule type" value="Genomic_RNA"/>
</dbReference>
<dbReference type="SMR" id="P16997"/>
<dbReference type="GlyCosmos" id="P16997">
    <property type="glycosylation" value="7 sites, No reported glycans"/>
</dbReference>
<dbReference type="GO" id="GO:0020002">
    <property type="term" value="C:host cell plasma membrane"/>
    <property type="evidence" value="ECO:0007669"/>
    <property type="project" value="UniProtKB-SubCell"/>
</dbReference>
<dbReference type="GO" id="GO:0016020">
    <property type="term" value="C:membrane"/>
    <property type="evidence" value="ECO:0007669"/>
    <property type="project" value="UniProtKB-UniRule"/>
</dbReference>
<dbReference type="GO" id="GO:0019031">
    <property type="term" value="C:viral envelope"/>
    <property type="evidence" value="ECO:0007669"/>
    <property type="project" value="UniProtKB-UniRule"/>
</dbReference>
<dbReference type="GO" id="GO:0055036">
    <property type="term" value="C:virion membrane"/>
    <property type="evidence" value="ECO:0007669"/>
    <property type="project" value="UniProtKB-SubCell"/>
</dbReference>
<dbReference type="GO" id="GO:0046789">
    <property type="term" value="F:host cell surface receptor binding"/>
    <property type="evidence" value="ECO:0007669"/>
    <property type="project" value="UniProtKB-UniRule"/>
</dbReference>
<dbReference type="GO" id="GO:0075512">
    <property type="term" value="P:clathrin-dependent endocytosis of virus by host cell"/>
    <property type="evidence" value="ECO:0007669"/>
    <property type="project" value="UniProtKB-UniRule"/>
</dbReference>
<dbReference type="GO" id="GO:0039654">
    <property type="term" value="P:fusion of virus membrane with host endosome membrane"/>
    <property type="evidence" value="ECO:0007669"/>
    <property type="project" value="UniProtKB-UniRule"/>
</dbReference>
<dbReference type="GO" id="GO:0019064">
    <property type="term" value="P:fusion of virus membrane with host plasma membrane"/>
    <property type="evidence" value="ECO:0007669"/>
    <property type="project" value="InterPro"/>
</dbReference>
<dbReference type="GO" id="GO:0046761">
    <property type="term" value="P:viral budding from plasma membrane"/>
    <property type="evidence" value="ECO:0007669"/>
    <property type="project" value="UniProtKB-UniRule"/>
</dbReference>
<dbReference type="GO" id="GO:0019062">
    <property type="term" value="P:virion attachment to host cell"/>
    <property type="evidence" value="ECO:0007669"/>
    <property type="project" value="UniProtKB-KW"/>
</dbReference>
<dbReference type="FunFam" id="3.90.20.10:FF:000001">
    <property type="entry name" value="Hemagglutinin"/>
    <property type="match status" value="1"/>
</dbReference>
<dbReference type="FunFam" id="3.90.209.20:FF:000001">
    <property type="entry name" value="Hemagglutinin"/>
    <property type="match status" value="1"/>
</dbReference>
<dbReference type="Gene3D" id="3.90.20.10">
    <property type="match status" value="1"/>
</dbReference>
<dbReference type="Gene3D" id="3.90.209.20">
    <property type="match status" value="1"/>
</dbReference>
<dbReference type="HAMAP" id="MF_04072">
    <property type="entry name" value="INFV_HEMA"/>
    <property type="match status" value="1"/>
</dbReference>
<dbReference type="InterPro" id="IPR008980">
    <property type="entry name" value="Capsid_hemagglutn"/>
</dbReference>
<dbReference type="InterPro" id="IPR013828">
    <property type="entry name" value="Hemagglutn_HA1_a/b_dom_sf"/>
</dbReference>
<dbReference type="InterPro" id="IPR000149">
    <property type="entry name" value="Hemagglutn_influenz_A"/>
</dbReference>
<dbReference type="InterPro" id="IPR001364">
    <property type="entry name" value="Hemagglutn_influenz_A/B"/>
</dbReference>
<dbReference type="Pfam" id="PF00509">
    <property type="entry name" value="Hemagglutinin"/>
    <property type="match status" value="1"/>
</dbReference>
<dbReference type="PRINTS" id="PR00330">
    <property type="entry name" value="HEMAGGLUTN1"/>
</dbReference>
<dbReference type="PRINTS" id="PR00329">
    <property type="entry name" value="HEMAGGLUTN12"/>
</dbReference>
<dbReference type="SUPFAM" id="SSF58064">
    <property type="entry name" value="Influenza hemagglutinin (stalk)"/>
    <property type="match status" value="1"/>
</dbReference>
<dbReference type="SUPFAM" id="SSF49818">
    <property type="entry name" value="Viral protein domain"/>
    <property type="match status" value="1"/>
</dbReference>
<accession>P16997</accession>
<accession>Q83996</accession>
<accession>Q83997</accession>
<keyword id="KW-1167">Clathrin- and caveolin-independent endocytosis of virus by host</keyword>
<keyword id="KW-1165">Clathrin-mediated endocytosis of virus by host</keyword>
<keyword id="KW-1015">Disulfide bond</keyword>
<keyword id="KW-1170">Fusion of virus membrane with host endosomal membrane</keyword>
<keyword id="KW-1168">Fusion of virus membrane with host membrane</keyword>
<keyword id="KW-0325">Glycoprotein</keyword>
<keyword id="KW-0348">Hemagglutinin</keyword>
<keyword id="KW-1032">Host cell membrane</keyword>
<keyword id="KW-1043">Host membrane</keyword>
<keyword id="KW-0945">Host-virus interaction</keyword>
<keyword id="KW-0449">Lipoprotein</keyword>
<keyword id="KW-0472">Membrane</keyword>
<keyword id="KW-0564">Palmitate</keyword>
<keyword id="KW-0732">Signal</keyword>
<keyword id="KW-0812">Transmembrane</keyword>
<keyword id="KW-1133">Transmembrane helix</keyword>
<keyword id="KW-1161">Viral attachment to host cell</keyword>
<keyword id="KW-0261">Viral envelope protein</keyword>
<keyword id="KW-1162">Viral penetration into host cytoplasm</keyword>
<keyword id="KW-0946">Virion</keyword>
<keyword id="KW-1164">Virus endocytosis by host</keyword>
<keyword id="KW-1160">Virus entry into host cell</keyword>
<gene>
    <name evidence="1" type="primary">HA</name>
</gene>
<reference key="1">
    <citation type="journal article" date="1989" name="Virology">
        <title>Evolution of the hemagglutinin of equine H3 influenza viruses.</title>
        <authorList>
            <person name="Kawaoka Y."/>
            <person name="Bean W.J."/>
            <person name="Webster R.G."/>
        </authorList>
    </citation>
    <scope>NUCLEOTIDE SEQUENCE [GENOMIC RNA]</scope>
</reference>
<name>HEMA_I76AJ</name>